<feature type="chain" id="PRO_0000270168" description="Nucleobase-ascorbate transporter 11">
    <location>
        <begin position="1"/>
        <end position="709"/>
    </location>
</feature>
<feature type="transmembrane region" description="Helical" evidence="1">
    <location>
        <begin position="196"/>
        <end position="216"/>
    </location>
</feature>
<feature type="transmembrane region" description="Helical" evidence="1">
    <location>
        <begin position="222"/>
        <end position="242"/>
    </location>
</feature>
<feature type="transmembrane region" description="Helical" evidence="1">
    <location>
        <begin position="246"/>
        <end position="266"/>
    </location>
</feature>
<feature type="transmembrane region" description="Helical" evidence="1">
    <location>
        <begin position="288"/>
        <end position="308"/>
    </location>
</feature>
<feature type="transmembrane region" description="Helical" evidence="1">
    <location>
        <begin position="310"/>
        <end position="330"/>
    </location>
</feature>
<feature type="transmembrane region" description="Helical" evidence="1">
    <location>
        <begin position="336"/>
        <end position="356"/>
    </location>
</feature>
<feature type="transmembrane region" description="Helical" evidence="1">
    <location>
        <begin position="369"/>
        <end position="389"/>
    </location>
</feature>
<feature type="transmembrane region" description="Helical" evidence="1">
    <location>
        <begin position="454"/>
        <end position="474"/>
    </location>
</feature>
<feature type="transmembrane region" description="Helical" evidence="1">
    <location>
        <begin position="532"/>
        <end position="552"/>
    </location>
</feature>
<feature type="transmembrane region" description="Helical" evidence="1">
    <location>
        <begin position="555"/>
        <end position="575"/>
    </location>
</feature>
<feature type="transmembrane region" description="Helical" evidence="1">
    <location>
        <begin position="590"/>
        <end position="610"/>
    </location>
</feature>
<feature type="transmembrane region" description="Helical" evidence="1">
    <location>
        <begin position="642"/>
        <end position="662"/>
    </location>
</feature>
<feature type="region of interest" description="Disordered" evidence="2">
    <location>
        <begin position="1"/>
        <end position="28"/>
    </location>
</feature>
<feature type="region of interest" description="Disordered" evidence="2">
    <location>
        <begin position="58"/>
        <end position="167"/>
    </location>
</feature>
<feature type="compositionally biased region" description="Gly residues" evidence="2">
    <location>
        <begin position="15"/>
        <end position="25"/>
    </location>
</feature>
<feature type="compositionally biased region" description="Polar residues" evidence="2">
    <location>
        <begin position="65"/>
        <end position="74"/>
    </location>
</feature>
<feature type="compositionally biased region" description="Basic and acidic residues" evidence="2">
    <location>
        <begin position="75"/>
        <end position="89"/>
    </location>
</feature>
<feature type="compositionally biased region" description="Basic and acidic residues" evidence="2">
    <location>
        <begin position="108"/>
        <end position="132"/>
    </location>
</feature>
<feature type="compositionally biased region" description="Basic and acidic residues" evidence="2">
    <location>
        <begin position="142"/>
        <end position="151"/>
    </location>
</feature>
<dbReference type="EMBL" id="AY444864">
    <property type="protein sequence ID" value="AAR18373.1"/>
    <property type="molecule type" value="mRNA"/>
</dbReference>
<dbReference type="EMBL" id="AL035538">
    <property type="protein sequence ID" value="CAB37545.1"/>
    <property type="status" value="ALT_SEQ"/>
    <property type="molecule type" value="Genomic_DNA"/>
</dbReference>
<dbReference type="EMBL" id="AL161592">
    <property type="protein sequence ID" value="CAB80470.1"/>
    <property type="status" value="ALT_SEQ"/>
    <property type="molecule type" value="Genomic_DNA"/>
</dbReference>
<dbReference type="EMBL" id="CP002687">
    <property type="protein sequence ID" value="AEE86867.1"/>
    <property type="molecule type" value="Genomic_DNA"/>
</dbReference>
<dbReference type="EMBL" id="AK118575">
    <property type="protein sequence ID" value="BAC43175.1"/>
    <property type="status" value="ALT_INIT"/>
    <property type="molecule type" value="mRNA"/>
</dbReference>
<dbReference type="EMBL" id="BT005360">
    <property type="protein sequence ID" value="AAO63424.1"/>
    <property type="molecule type" value="mRNA"/>
</dbReference>
<dbReference type="EMBL" id="AY086791">
    <property type="protein sequence ID" value="AAM67365.1"/>
    <property type="molecule type" value="mRNA"/>
</dbReference>
<dbReference type="PIR" id="T05632">
    <property type="entry name" value="T05632"/>
</dbReference>
<dbReference type="RefSeq" id="NP_195518.2">
    <property type="nucleotide sequence ID" value="NM_119966.5"/>
</dbReference>
<dbReference type="SMR" id="Q6SZ87"/>
<dbReference type="FunCoup" id="Q6SZ87">
    <property type="interactions" value="197"/>
</dbReference>
<dbReference type="STRING" id="3702.Q6SZ87"/>
<dbReference type="GlyGen" id="Q6SZ87">
    <property type="glycosylation" value="1 site"/>
</dbReference>
<dbReference type="iPTMnet" id="Q6SZ87"/>
<dbReference type="PaxDb" id="3702-AT4G38050.1"/>
<dbReference type="ProteomicsDB" id="251092"/>
<dbReference type="EnsemblPlants" id="AT4G38050.1">
    <property type="protein sequence ID" value="AT4G38050.1"/>
    <property type="gene ID" value="AT4G38050"/>
</dbReference>
<dbReference type="GeneID" id="829961"/>
<dbReference type="Gramene" id="AT4G38050.1">
    <property type="protein sequence ID" value="AT4G38050.1"/>
    <property type="gene ID" value="AT4G38050"/>
</dbReference>
<dbReference type="KEGG" id="ath:AT4G38050"/>
<dbReference type="Araport" id="AT4G38050"/>
<dbReference type="TAIR" id="AT4G38050"/>
<dbReference type="eggNOG" id="KOG1292">
    <property type="taxonomic scope" value="Eukaryota"/>
</dbReference>
<dbReference type="HOGENOM" id="CLU_017959_5_2_1"/>
<dbReference type="InParanoid" id="Q6SZ87"/>
<dbReference type="OMA" id="FRNIMIV"/>
<dbReference type="PhylomeDB" id="Q6SZ87"/>
<dbReference type="PRO" id="PR:Q6SZ87"/>
<dbReference type="Proteomes" id="UP000006548">
    <property type="component" value="Chromosome 4"/>
</dbReference>
<dbReference type="ExpressionAtlas" id="Q6SZ87">
    <property type="expression patterns" value="baseline and differential"/>
</dbReference>
<dbReference type="GO" id="GO:0016020">
    <property type="term" value="C:membrane"/>
    <property type="evidence" value="ECO:0007669"/>
    <property type="project" value="UniProtKB-SubCell"/>
</dbReference>
<dbReference type="GO" id="GO:0022857">
    <property type="term" value="F:transmembrane transporter activity"/>
    <property type="evidence" value="ECO:0007669"/>
    <property type="project" value="InterPro"/>
</dbReference>
<dbReference type="InterPro" id="IPR006043">
    <property type="entry name" value="NCS2"/>
</dbReference>
<dbReference type="NCBIfam" id="NF037981">
    <property type="entry name" value="NCS2_1"/>
    <property type="match status" value="1"/>
</dbReference>
<dbReference type="PANTHER" id="PTHR11119">
    <property type="entry name" value="XANTHINE-URACIL / VITAMIN C PERMEASE FAMILY MEMBER"/>
    <property type="match status" value="1"/>
</dbReference>
<dbReference type="Pfam" id="PF00860">
    <property type="entry name" value="Xan_ur_permease"/>
    <property type="match status" value="1"/>
</dbReference>
<protein>
    <recommendedName>
        <fullName>Nucleobase-ascorbate transporter 11</fullName>
        <shortName>AtNAT11</shortName>
    </recommendedName>
</protein>
<organism>
    <name type="scientific">Arabidopsis thaliana</name>
    <name type="common">Mouse-ear cress</name>
    <dbReference type="NCBI Taxonomy" id="3702"/>
    <lineage>
        <taxon>Eukaryota</taxon>
        <taxon>Viridiplantae</taxon>
        <taxon>Streptophyta</taxon>
        <taxon>Embryophyta</taxon>
        <taxon>Tracheophyta</taxon>
        <taxon>Spermatophyta</taxon>
        <taxon>Magnoliopsida</taxon>
        <taxon>eudicotyledons</taxon>
        <taxon>Gunneridae</taxon>
        <taxon>Pentapetalae</taxon>
        <taxon>rosids</taxon>
        <taxon>malvids</taxon>
        <taxon>Brassicales</taxon>
        <taxon>Brassicaceae</taxon>
        <taxon>Camelineae</taxon>
        <taxon>Arabidopsis</taxon>
    </lineage>
</organism>
<proteinExistence type="evidence at transcript level"/>
<reference key="1">
    <citation type="journal article" date="2006" name="Plant Cell Physiol.">
        <title>Identification and expression analysis of twelve members of the nucleobase-ascorbate transporter (NAT) gene family in Arabidopsis thaliana.</title>
        <authorList>
            <person name="Maurino V.G."/>
            <person name="Grube E."/>
            <person name="Zielinski J."/>
            <person name="Schild A."/>
            <person name="Fischer K."/>
            <person name="Flugge U.-I."/>
        </authorList>
    </citation>
    <scope>NUCLEOTIDE SEQUENCE [MRNA]</scope>
    <scope>GENE FAMILY</scope>
    <scope>TISSUE SPECIFICITY</scope>
    <source>
        <strain>cv. Columbia</strain>
    </source>
</reference>
<reference key="2">
    <citation type="journal article" date="1999" name="Nature">
        <title>Sequence and analysis of chromosome 4 of the plant Arabidopsis thaliana.</title>
        <authorList>
            <person name="Mayer K.F.X."/>
            <person name="Schueller C."/>
            <person name="Wambutt R."/>
            <person name="Murphy G."/>
            <person name="Volckaert G."/>
            <person name="Pohl T."/>
            <person name="Duesterhoeft A."/>
            <person name="Stiekema W."/>
            <person name="Entian K.-D."/>
            <person name="Terryn N."/>
            <person name="Harris B."/>
            <person name="Ansorge W."/>
            <person name="Brandt P."/>
            <person name="Grivell L.A."/>
            <person name="Rieger M."/>
            <person name="Weichselgartner M."/>
            <person name="de Simone V."/>
            <person name="Obermaier B."/>
            <person name="Mache R."/>
            <person name="Mueller M."/>
            <person name="Kreis M."/>
            <person name="Delseny M."/>
            <person name="Puigdomenech P."/>
            <person name="Watson M."/>
            <person name="Schmidtheini T."/>
            <person name="Reichert B."/>
            <person name="Portetelle D."/>
            <person name="Perez-Alonso M."/>
            <person name="Boutry M."/>
            <person name="Bancroft I."/>
            <person name="Vos P."/>
            <person name="Hoheisel J."/>
            <person name="Zimmermann W."/>
            <person name="Wedler H."/>
            <person name="Ridley P."/>
            <person name="Langham S.-A."/>
            <person name="McCullagh B."/>
            <person name="Bilham L."/>
            <person name="Robben J."/>
            <person name="van der Schueren J."/>
            <person name="Grymonprez B."/>
            <person name="Chuang Y.-J."/>
            <person name="Vandenbussche F."/>
            <person name="Braeken M."/>
            <person name="Weltjens I."/>
            <person name="Voet M."/>
            <person name="Bastiaens I."/>
            <person name="Aert R."/>
            <person name="Defoor E."/>
            <person name="Weitzenegger T."/>
            <person name="Bothe G."/>
            <person name="Ramsperger U."/>
            <person name="Hilbert H."/>
            <person name="Braun M."/>
            <person name="Holzer E."/>
            <person name="Brandt A."/>
            <person name="Peters S."/>
            <person name="van Staveren M."/>
            <person name="Dirkse W."/>
            <person name="Mooijman P."/>
            <person name="Klein Lankhorst R."/>
            <person name="Rose M."/>
            <person name="Hauf J."/>
            <person name="Koetter P."/>
            <person name="Berneiser S."/>
            <person name="Hempel S."/>
            <person name="Feldpausch M."/>
            <person name="Lamberth S."/>
            <person name="Van den Daele H."/>
            <person name="De Keyser A."/>
            <person name="Buysshaert C."/>
            <person name="Gielen J."/>
            <person name="Villarroel R."/>
            <person name="De Clercq R."/>
            <person name="van Montagu M."/>
            <person name="Rogers J."/>
            <person name="Cronin A."/>
            <person name="Quail M.A."/>
            <person name="Bray-Allen S."/>
            <person name="Clark L."/>
            <person name="Doggett J."/>
            <person name="Hall S."/>
            <person name="Kay M."/>
            <person name="Lennard N."/>
            <person name="McLay K."/>
            <person name="Mayes R."/>
            <person name="Pettett A."/>
            <person name="Rajandream M.A."/>
            <person name="Lyne M."/>
            <person name="Benes V."/>
            <person name="Rechmann S."/>
            <person name="Borkova D."/>
            <person name="Bloecker H."/>
            <person name="Scharfe M."/>
            <person name="Grimm M."/>
            <person name="Loehnert T.-H."/>
            <person name="Dose S."/>
            <person name="de Haan M."/>
            <person name="Maarse A.C."/>
            <person name="Schaefer M."/>
            <person name="Mueller-Auer S."/>
            <person name="Gabel C."/>
            <person name="Fuchs M."/>
            <person name="Fartmann B."/>
            <person name="Granderath K."/>
            <person name="Dauner D."/>
            <person name="Herzl A."/>
            <person name="Neumann S."/>
            <person name="Argiriou A."/>
            <person name="Vitale D."/>
            <person name="Liguori R."/>
            <person name="Piravandi E."/>
            <person name="Massenet O."/>
            <person name="Quigley F."/>
            <person name="Clabauld G."/>
            <person name="Muendlein A."/>
            <person name="Felber R."/>
            <person name="Schnabl S."/>
            <person name="Hiller R."/>
            <person name="Schmidt W."/>
            <person name="Lecharny A."/>
            <person name="Aubourg S."/>
            <person name="Chefdor F."/>
            <person name="Cooke R."/>
            <person name="Berger C."/>
            <person name="Monfort A."/>
            <person name="Casacuberta E."/>
            <person name="Gibbons T."/>
            <person name="Weber N."/>
            <person name="Vandenbol M."/>
            <person name="Bargues M."/>
            <person name="Terol J."/>
            <person name="Torres A."/>
            <person name="Perez-Perez A."/>
            <person name="Purnelle B."/>
            <person name="Bent E."/>
            <person name="Johnson S."/>
            <person name="Tacon D."/>
            <person name="Jesse T."/>
            <person name="Heijnen L."/>
            <person name="Schwarz S."/>
            <person name="Scholler P."/>
            <person name="Heber S."/>
            <person name="Francs P."/>
            <person name="Bielke C."/>
            <person name="Frishman D."/>
            <person name="Haase D."/>
            <person name="Lemcke K."/>
            <person name="Mewes H.-W."/>
            <person name="Stocker S."/>
            <person name="Zaccaria P."/>
            <person name="Bevan M."/>
            <person name="Wilson R.K."/>
            <person name="de la Bastide M."/>
            <person name="Habermann K."/>
            <person name="Parnell L."/>
            <person name="Dedhia N."/>
            <person name="Gnoj L."/>
            <person name="Schutz K."/>
            <person name="Huang E."/>
            <person name="Spiegel L."/>
            <person name="Sekhon M."/>
            <person name="Murray J."/>
            <person name="Sheet P."/>
            <person name="Cordes M."/>
            <person name="Abu-Threideh J."/>
            <person name="Stoneking T."/>
            <person name="Kalicki J."/>
            <person name="Graves T."/>
            <person name="Harmon G."/>
            <person name="Edwards J."/>
            <person name="Latreille P."/>
            <person name="Courtney L."/>
            <person name="Cloud J."/>
            <person name="Abbott A."/>
            <person name="Scott K."/>
            <person name="Johnson D."/>
            <person name="Minx P."/>
            <person name="Bentley D."/>
            <person name="Fulton B."/>
            <person name="Miller N."/>
            <person name="Greco T."/>
            <person name="Kemp K."/>
            <person name="Kramer J."/>
            <person name="Fulton L."/>
            <person name="Mardis E."/>
            <person name="Dante M."/>
            <person name="Pepin K."/>
            <person name="Hillier L.W."/>
            <person name="Nelson J."/>
            <person name="Spieth J."/>
            <person name="Ryan E."/>
            <person name="Andrews S."/>
            <person name="Geisel C."/>
            <person name="Layman D."/>
            <person name="Du H."/>
            <person name="Ali J."/>
            <person name="Berghoff A."/>
            <person name="Jones K."/>
            <person name="Drone K."/>
            <person name="Cotton M."/>
            <person name="Joshu C."/>
            <person name="Antonoiu B."/>
            <person name="Zidanic M."/>
            <person name="Strong C."/>
            <person name="Sun H."/>
            <person name="Lamar B."/>
            <person name="Yordan C."/>
            <person name="Ma P."/>
            <person name="Zhong J."/>
            <person name="Preston R."/>
            <person name="Vil D."/>
            <person name="Shekher M."/>
            <person name="Matero A."/>
            <person name="Shah R."/>
            <person name="Swaby I.K."/>
            <person name="O'Shaughnessy A."/>
            <person name="Rodriguez M."/>
            <person name="Hoffman J."/>
            <person name="Till S."/>
            <person name="Granat S."/>
            <person name="Shohdy N."/>
            <person name="Hasegawa A."/>
            <person name="Hameed A."/>
            <person name="Lodhi M."/>
            <person name="Johnson A."/>
            <person name="Chen E."/>
            <person name="Marra M.A."/>
            <person name="Martienssen R."/>
            <person name="McCombie W.R."/>
        </authorList>
    </citation>
    <scope>NUCLEOTIDE SEQUENCE [LARGE SCALE GENOMIC DNA]</scope>
    <source>
        <strain>cv. Columbia</strain>
    </source>
</reference>
<reference key="3">
    <citation type="journal article" date="2017" name="Plant J.">
        <title>Araport11: a complete reannotation of the Arabidopsis thaliana reference genome.</title>
        <authorList>
            <person name="Cheng C.Y."/>
            <person name="Krishnakumar V."/>
            <person name="Chan A.P."/>
            <person name="Thibaud-Nissen F."/>
            <person name="Schobel S."/>
            <person name="Town C.D."/>
        </authorList>
    </citation>
    <scope>GENOME REANNOTATION</scope>
    <source>
        <strain>cv. Columbia</strain>
    </source>
</reference>
<reference key="4">
    <citation type="journal article" date="2002" name="Science">
        <title>Functional annotation of a full-length Arabidopsis cDNA collection.</title>
        <authorList>
            <person name="Seki M."/>
            <person name="Narusaka M."/>
            <person name="Kamiya A."/>
            <person name="Ishida J."/>
            <person name="Satou M."/>
            <person name="Sakurai T."/>
            <person name="Nakajima M."/>
            <person name="Enju A."/>
            <person name="Akiyama K."/>
            <person name="Oono Y."/>
            <person name="Muramatsu M."/>
            <person name="Hayashizaki Y."/>
            <person name="Kawai J."/>
            <person name="Carninci P."/>
            <person name="Itoh M."/>
            <person name="Ishii Y."/>
            <person name="Arakawa T."/>
            <person name="Shibata K."/>
            <person name="Shinagawa A."/>
            <person name="Shinozaki K."/>
        </authorList>
    </citation>
    <scope>NUCLEOTIDE SEQUENCE [LARGE SCALE MRNA] OF 237-709</scope>
    <source>
        <strain>cv. Columbia</strain>
    </source>
</reference>
<reference key="5">
    <citation type="journal article" date="2003" name="Science">
        <title>Empirical analysis of transcriptional activity in the Arabidopsis genome.</title>
        <authorList>
            <person name="Yamada K."/>
            <person name="Lim J."/>
            <person name="Dale J.M."/>
            <person name="Chen H."/>
            <person name="Shinn P."/>
            <person name="Palm C.J."/>
            <person name="Southwick A.M."/>
            <person name="Wu H.C."/>
            <person name="Kim C.J."/>
            <person name="Nguyen M."/>
            <person name="Pham P.K."/>
            <person name="Cheuk R.F."/>
            <person name="Karlin-Newmann G."/>
            <person name="Liu S.X."/>
            <person name="Lam B."/>
            <person name="Sakano H."/>
            <person name="Wu T."/>
            <person name="Yu G."/>
            <person name="Miranda M."/>
            <person name="Quach H.L."/>
            <person name="Tripp M."/>
            <person name="Chang C.H."/>
            <person name="Lee J.M."/>
            <person name="Toriumi M.J."/>
            <person name="Chan M.M."/>
            <person name="Tang C.C."/>
            <person name="Onodera C.S."/>
            <person name="Deng J.M."/>
            <person name="Akiyama K."/>
            <person name="Ansari Y."/>
            <person name="Arakawa T."/>
            <person name="Banh J."/>
            <person name="Banno F."/>
            <person name="Bowser L."/>
            <person name="Brooks S.Y."/>
            <person name="Carninci P."/>
            <person name="Chao Q."/>
            <person name="Choy N."/>
            <person name="Enju A."/>
            <person name="Goldsmith A.D."/>
            <person name="Gurjal M."/>
            <person name="Hansen N.F."/>
            <person name="Hayashizaki Y."/>
            <person name="Johnson-Hopson C."/>
            <person name="Hsuan V.W."/>
            <person name="Iida K."/>
            <person name="Karnes M."/>
            <person name="Khan S."/>
            <person name="Koesema E."/>
            <person name="Ishida J."/>
            <person name="Jiang P.X."/>
            <person name="Jones T."/>
            <person name="Kawai J."/>
            <person name="Kamiya A."/>
            <person name="Meyers C."/>
            <person name="Nakajima M."/>
            <person name="Narusaka M."/>
            <person name="Seki M."/>
            <person name="Sakurai T."/>
            <person name="Satou M."/>
            <person name="Tamse R."/>
            <person name="Vaysberg M."/>
            <person name="Wallender E.K."/>
            <person name="Wong C."/>
            <person name="Yamamura Y."/>
            <person name="Yuan S."/>
            <person name="Shinozaki K."/>
            <person name="Davis R.W."/>
            <person name="Theologis A."/>
            <person name="Ecker J.R."/>
        </authorList>
    </citation>
    <scope>NUCLEOTIDE SEQUENCE [LARGE SCALE MRNA] OF 281-709</scope>
    <source>
        <strain>cv. Columbia</strain>
    </source>
</reference>
<reference key="6">
    <citation type="submission" date="2002-03" db="EMBL/GenBank/DDBJ databases">
        <title>Full-length cDNA from Arabidopsis thaliana.</title>
        <authorList>
            <person name="Brover V.V."/>
            <person name="Troukhan M.E."/>
            <person name="Alexandrov N.A."/>
            <person name="Lu Y.-P."/>
            <person name="Flavell R.B."/>
            <person name="Feldmann K.A."/>
        </authorList>
    </citation>
    <scope>NUCLEOTIDE SEQUENCE [LARGE SCALE MRNA] OF 562-709</scope>
</reference>
<comment type="subcellular location">
    <subcellularLocation>
        <location evidence="4">Membrane</location>
        <topology evidence="4">Multi-pass membrane protein</topology>
    </subcellularLocation>
</comment>
<comment type="tissue specificity">
    <text evidence="3">Expressed in leaf primordia and vasculature of pedicels, rosette leaves, sepals, carpels and siliques. Expressed in the root central cylinder.</text>
</comment>
<comment type="similarity">
    <text evidence="4">Belongs to the nucleobase:cation symporter-2 (NCS2) (TC 2.A.40) family.</text>
</comment>
<comment type="sequence caution" evidence="4">
    <conflict type="erroneous initiation">
        <sequence resource="EMBL-CDS" id="BAC43175"/>
    </conflict>
</comment>
<comment type="sequence caution" evidence="4">
    <conflict type="erroneous gene model prediction">
        <sequence resource="EMBL-CDS" id="CAB37545"/>
    </conflict>
</comment>
<comment type="sequence caution" evidence="4">
    <conflict type="erroneous gene model prediction">
        <sequence resource="EMBL-CDS" id="CAB80470"/>
    </conflict>
</comment>
<accession>Q6SZ87</accession>
<accession>Q8GWX5</accession>
<accession>Q8LC52</accession>
<accession>Q9SZK5</accession>
<gene>
    <name type="primary">NAT11</name>
    <name type="ordered locus">At4g38050</name>
    <name type="ORF">F20D10.170</name>
</gene>
<name>NAT11_ARATH</name>
<sequence>MDSGSGFDPDTGNNKGNGSGGGNGYGERKFGAFFKRVEPFLPKKDLNPRDLRSWAKKTGFVSDYSGETSTSTRTKFGESSDFDLPKGRDQVVTGSSHKTEIDPILGRNRPEIEHVTGSEPVSREEEERRLNRNEATPETENEGGKINKDLENGFYYPGGGGESSEDGQWPKPILMKFGLRDNPGFVPLIYYGLQHYLSLVGSLVFIPLVIVPAMDGSDKDTASVISTMLLLTGVTTILHCYFGTRLPLVQGSSFVYLAPVLVVINSEEFRNLTEHKFRDTMRELQGAIIVGSLFQCILGFSGLMSLLLRFINPVVVAPTVAAVGLAFFSYGFPQAGTCVEISVPLILLLLIFTLYLRGVSLFGHRLFRIYAVPLSALLIWTYAFFLTVGGAYDYRGCNADIPSSNILIDECKKHVYTMKHCRTDASNAWRTASWVRIPYPFQWGFPNFHMRTSIIMIFVSLVASVDSVGTYHSASMIVNAKRPTRGIVSRGIALEGFCSLLAGIWGSGTGSTTLTENIHTINITKVASRRALVIGAMFLIVLSFLGKLGAILASIPQALAASVLCFIWALTVSLGLSNLRYTQTASFRNITIVGVSLFLGLSIPAYFQQYQPLSSLILPSYYIPFGAASSGPFQTGIEQLDFAMNAVLSLNMVVTFLLAFILDNTVPGSKEERGVYVWTRAEDMQMDPEMRADYSLPRKFAQIFGCRCC</sequence>
<evidence type="ECO:0000255" key="1"/>
<evidence type="ECO:0000256" key="2">
    <source>
        <dbReference type="SAM" id="MobiDB-lite"/>
    </source>
</evidence>
<evidence type="ECO:0000269" key="3">
    <source>
    </source>
</evidence>
<evidence type="ECO:0000305" key="4"/>
<keyword id="KW-0472">Membrane</keyword>
<keyword id="KW-1185">Reference proteome</keyword>
<keyword id="KW-0812">Transmembrane</keyword>
<keyword id="KW-1133">Transmembrane helix</keyword>
<keyword id="KW-0813">Transport</keyword>